<dbReference type="EC" id="2.3.1.274" evidence="1"/>
<dbReference type="EMBL" id="AP007281">
    <property type="protein sequence ID" value="BAG25610.1"/>
    <property type="molecule type" value="Genomic_DNA"/>
</dbReference>
<dbReference type="RefSeq" id="WP_003668375.1">
    <property type="nucleotide sequence ID" value="NC_010609.1"/>
</dbReference>
<dbReference type="SMR" id="B2G828"/>
<dbReference type="KEGG" id="lrf:LAR_1094"/>
<dbReference type="HOGENOM" id="CLU_039379_1_1_9"/>
<dbReference type="UniPathway" id="UPA00085"/>
<dbReference type="GO" id="GO:0005737">
    <property type="term" value="C:cytoplasm"/>
    <property type="evidence" value="ECO:0007669"/>
    <property type="project" value="UniProtKB-SubCell"/>
</dbReference>
<dbReference type="GO" id="GO:0043811">
    <property type="term" value="F:phosphate:acyl-[acyl carrier protein] acyltransferase activity"/>
    <property type="evidence" value="ECO:0007669"/>
    <property type="project" value="UniProtKB-UniRule"/>
</dbReference>
<dbReference type="GO" id="GO:0006633">
    <property type="term" value="P:fatty acid biosynthetic process"/>
    <property type="evidence" value="ECO:0007669"/>
    <property type="project" value="UniProtKB-UniRule"/>
</dbReference>
<dbReference type="GO" id="GO:0008654">
    <property type="term" value="P:phospholipid biosynthetic process"/>
    <property type="evidence" value="ECO:0007669"/>
    <property type="project" value="UniProtKB-KW"/>
</dbReference>
<dbReference type="Gene3D" id="3.40.718.10">
    <property type="entry name" value="Isopropylmalate Dehydrogenase"/>
    <property type="match status" value="1"/>
</dbReference>
<dbReference type="HAMAP" id="MF_00019">
    <property type="entry name" value="PlsX"/>
    <property type="match status" value="1"/>
</dbReference>
<dbReference type="InterPro" id="IPR003664">
    <property type="entry name" value="FA_synthesis"/>
</dbReference>
<dbReference type="InterPro" id="IPR012281">
    <property type="entry name" value="Phospholipid_synth_PlsX-like"/>
</dbReference>
<dbReference type="NCBIfam" id="TIGR00182">
    <property type="entry name" value="plsX"/>
    <property type="match status" value="1"/>
</dbReference>
<dbReference type="PANTHER" id="PTHR30100">
    <property type="entry name" value="FATTY ACID/PHOSPHOLIPID SYNTHESIS PROTEIN PLSX"/>
    <property type="match status" value="1"/>
</dbReference>
<dbReference type="PANTHER" id="PTHR30100:SF1">
    <property type="entry name" value="PHOSPHATE ACYLTRANSFERASE"/>
    <property type="match status" value="1"/>
</dbReference>
<dbReference type="Pfam" id="PF02504">
    <property type="entry name" value="FA_synthesis"/>
    <property type="match status" value="1"/>
</dbReference>
<dbReference type="PIRSF" id="PIRSF002465">
    <property type="entry name" value="Phsphlp_syn_PlsX"/>
    <property type="match status" value="1"/>
</dbReference>
<dbReference type="SUPFAM" id="SSF53659">
    <property type="entry name" value="Isocitrate/Isopropylmalate dehydrogenase-like"/>
    <property type="match status" value="1"/>
</dbReference>
<evidence type="ECO:0000255" key="1">
    <source>
        <dbReference type="HAMAP-Rule" id="MF_00019"/>
    </source>
</evidence>
<keyword id="KW-0963">Cytoplasm</keyword>
<keyword id="KW-0444">Lipid biosynthesis</keyword>
<keyword id="KW-0443">Lipid metabolism</keyword>
<keyword id="KW-0594">Phospholipid biosynthesis</keyword>
<keyword id="KW-1208">Phospholipid metabolism</keyword>
<keyword id="KW-0808">Transferase</keyword>
<protein>
    <recommendedName>
        <fullName evidence="1">Phosphate acyltransferase</fullName>
        <ecNumber evidence="1">2.3.1.274</ecNumber>
    </recommendedName>
    <alternativeName>
        <fullName evidence="1">Acyl-ACP phosphotransacylase</fullName>
    </alternativeName>
    <alternativeName>
        <fullName evidence="1">Acyl-[acyl-carrier-protein]--phosphate acyltransferase</fullName>
    </alternativeName>
    <alternativeName>
        <fullName evidence="1">Phosphate-acyl-ACP acyltransferase</fullName>
    </alternativeName>
</protein>
<reference key="1">
    <citation type="journal article" date="2008" name="DNA Res.">
        <title>Comparative genome analysis of Lactobacillus reuteri and Lactobacillus fermentum reveal a genomic island for reuterin and cobalamin production.</title>
        <authorList>
            <person name="Morita H."/>
            <person name="Toh H."/>
            <person name="Fukuda S."/>
            <person name="Horikawa H."/>
            <person name="Oshima K."/>
            <person name="Suzuki T."/>
            <person name="Murakami M."/>
            <person name="Hisamatsu S."/>
            <person name="Kato Y."/>
            <person name="Takizawa T."/>
            <person name="Fukuoka H."/>
            <person name="Yoshimura T."/>
            <person name="Itoh K."/>
            <person name="O'Sullivan D.J."/>
            <person name="McKay L.L."/>
            <person name="Ohno H."/>
            <person name="Kikuchi J."/>
            <person name="Masaoka T."/>
            <person name="Hattori M."/>
        </authorList>
    </citation>
    <scope>NUCLEOTIDE SEQUENCE [LARGE SCALE GENOMIC DNA]</scope>
    <source>
        <strain>JCM 1112</strain>
    </source>
</reference>
<feature type="chain" id="PRO_1000089919" description="Phosphate acyltransferase">
    <location>
        <begin position="1"/>
        <end position="343"/>
    </location>
</feature>
<accession>B2G828</accession>
<gene>
    <name evidence="1" type="primary">plsX</name>
    <name type="ordered locus">LAR_1094</name>
</gene>
<comment type="function">
    <text evidence="1">Catalyzes the reversible formation of acyl-phosphate (acyl-PO(4)) from acyl-[acyl-carrier-protein] (acyl-ACP). This enzyme utilizes acyl-ACP as fatty acyl donor, but not acyl-CoA.</text>
</comment>
<comment type="catalytic activity">
    <reaction evidence="1">
        <text>a fatty acyl-[ACP] + phosphate = an acyl phosphate + holo-[ACP]</text>
        <dbReference type="Rhea" id="RHEA:42292"/>
        <dbReference type="Rhea" id="RHEA-COMP:9685"/>
        <dbReference type="Rhea" id="RHEA-COMP:14125"/>
        <dbReference type="ChEBI" id="CHEBI:43474"/>
        <dbReference type="ChEBI" id="CHEBI:59918"/>
        <dbReference type="ChEBI" id="CHEBI:64479"/>
        <dbReference type="ChEBI" id="CHEBI:138651"/>
        <dbReference type="EC" id="2.3.1.274"/>
    </reaction>
</comment>
<comment type="pathway">
    <text evidence="1">Lipid metabolism; phospholipid metabolism.</text>
</comment>
<comment type="subunit">
    <text evidence="1">Homodimer. Probably interacts with PlsY.</text>
</comment>
<comment type="subcellular location">
    <subcellularLocation>
        <location evidence="1">Cytoplasm</location>
    </subcellularLocation>
    <text evidence="1">Associated with the membrane possibly through PlsY.</text>
</comment>
<comment type="similarity">
    <text evidence="1">Belongs to the PlsX family.</text>
</comment>
<proteinExistence type="inferred from homology"/>
<name>PLSX_LIMRJ</name>
<sequence length="343" mass="36975">MKIAVDAMGGDNAPQVIIEGVEEARDLYPDLEFDLYGNPDKVKPLIKNNERLNIVATSEEISMGEEPVRAIRRKKDSSIVRAATAVKEGKADAFFSAGNTGAILAAGLFIVGRIKGIDRPGLTSILPIAKPGASRHNFVYLDTGANAESKEKNLEQYAYLGKFYAENVLGVANPRIALLNNGAEEDKGDKLHKEVWQILNSKDDLNFVGNIESGDLLFGKADVVVSDGWTANAALKATEGTAKMMMTLIKDGILHGGLRAKLGYLMLKPVFHQIGQKMSASTYGGAVLLGLKAPVVKTHGSADALAVKNTISQIRTMLKTGVIEKTVEFFDSTENLDNSQKNE</sequence>
<organism>
    <name type="scientific">Limosilactobacillus reuteri subsp. reuteri (strain JCM 1112)</name>
    <name type="common">Lactobacillus reuteri</name>
    <dbReference type="NCBI Taxonomy" id="557433"/>
    <lineage>
        <taxon>Bacteria</taxon>
        <taxon>Bacillati</taxon>
        <taxon>Bacillota</taxon>
        <taxon>Bacilli</taxon>
        <taxon>Lactobacillales</taxon>
        <taxon>Lactobacillaceae</taxon>
        <taxon>Limosilactobacillus</taxon>
    </lineage>
</organism>